<organism>
    <name type="scientific">Rattus norvegicus</name>
    <name type="common">Rat</name>
    <dbReference type="NCBI Taxonomy" id="10116"/>
    <lineage>
        <taxon>Eukaryota</taxon>
        <taxon>Metazoa</taxon>
        <taxon>Chordata</taxon>
        <taxon>Craniata</taxon>
        <taxon>Vertebrata</taxon>
        <taxon>Euteleostomi</taxon>
        <taxon>Mammalia</taxon>
        <taxon>Eutheria</taxon>
        <taxon>Euarchontoglires</taxon>
        <taxon>Glires</taxon>
        <taxon>Rodentia</taxon>
        <taxon>Myomorpha</taxon>
        <taxon>Muroidea</taxon>
        <taxon>Muridae</taxon>
        <taxon>Murinae</taxon>
        <taxon>Rattus</taxon>
    </lineage>
</organism>
<feature type="initiator methionine" description="Removed" evidence="2">
    <location>
        <position position="1"/>
    </location>
</feature>
<feature type="chain" id="PRO_0000199578" description="Profilin-2">
    <location>
        <begin position="2"/>
        <end position="140"/>
    </location>
</feature>
<feature type="modified residue" description="N-acetylalanine" evidence="2">
    <location>
        <position position="2"/>
    </location>
</feature>
<feature type="sequence conflict" description="In Ref. 2." evidence="4" ref="2">
    <original>GF</original>
    <variation>WVLAARQTVKY</variation>
    <location>
        <begin position="139"/>
        <end position="140"/>
    </location>
</feature>
<feature type="helix" evidence="5">
    <location>
        <begin position="2"/>
        <end position="9"/>
    </location>
</feature>
<feature type="helix" evidence="5">
    <location>
        <begin position="11"/>
        <end position="14"/>
    </location>
</feature>
<feature type="strand" evidence="5">
    <location>
        <begin position="15"/>
        <end position="24"/>
    </location>
</feature>
<feature type="strand" evidence="5">
    <location>
        <begin position="26"/>
        <end position="28"/>
    </location>
</feature>
<feature type="strand" evidence="5">
    <location>
        <begin position="30"/>
        <end position="34"/>
    </location>
</feature>
<feature type="helix" evidence="5">
    <location>
        <begin position="40"/>
        <end position="42"/>
    </location>
</feature>
<feature type="helix" evidence="5">
    <location>
        <begin position="45"/>
        <end position="52"/>
    </location>
</feature>
<feature type="helix" evidence="5">
    <location>
        <begin position="58"/>
        <end position="62"/>
    </location>
</feature>
<feature type="strand" evidence="5">
    <location>
        <begin position="64"/>
        <end position="66"/>
    </location>
</feature>
<feature type="strand" evidence="5">
    <location>
        <begin position="69"/>
        <end position="76"/>
    </location>
</feature>
<feature type="turn" evidence="5">
    <location>
        <begin position="81"/>
        <end position="83"/>
    </location>
</feature>
<feature type="strand" evidence="5">
    <location>
        <begin position="85"/>
        <end position="90"/>
    </location>
</feature>
<feature type="strand" evidence="5">
    <location>
        <begin position="93"/>
        <end position="96"/>
    </location>
</feature>
<feature type="strand" evidence="5">
    <location>
        <begin position="100"/>
        <end position="105"/>
    </location>
</feature>
<feature type="strand" evidence="5">
    <location>
        <begin position="107"/>
        <end position="115"/>
    </location>
</feature>
<feature type="helix" evidence="5">
    <location>
        <begin position="121"/>
        <end position="137"/>
    </location>
</feature>
<accession>Q9EPC6</accession>
<accession>Q9JHU7</accession>
<comment type="function">
    <text evidence="1">Binds to actin and affects the structure of the cytoskeleton. At high concentrations, profilin prevents the polymerization of actin, whereas it enhances it at low concentrations. By binding to PIP2, it inhibits the formation of IP3 and DG (By similarity).</text>
</comment>
<comment type="subunit">
    <text evidence="2 3">Occurs in many kinds of cells as a complex with monomeric actin in a 1:1 ratio (By similarity). Interacts with PFN2 (By similarity). Interacts with ACTMAP (via N-terminus); the interaction may facilitate efficient cleavage of the acetylated N-terminus of immature actin by ACTMAP (By similarity).</text>
</comment>
<comment type="subcellular location">
    <subcellularLocation>
        <location evidence="1">Cytoplasm</location>
        <location evidence="1">Cytoskeleton</location>
    </subcellularLocation>
</comment>
<comment type="alternative products">
    <event type="alternative splicing"/>
    <isoform>
        <id>Q9EPC6-1</id>
        <name>IIa</name>
        <sequence type="displayed"/>
    </isoform>
    <isoform>
        <id>Q9EPC6-2</id>
        <name>IIb</name>
        <sequence type="not described"/>
    </isoform>
</comment>
<comment type="similarity">
    <text evidence="4">Belongs to the profilin family.</text>
</comment>
<sequence>MAGWQSYVDNLMCDGCCQEAAIVGYCDAKYVWAATAGGVFQSITPAEIDVIIGKDREGFFTNGLTLGGKKCSVIRDSLYVDSDCTMDIRTKSQGGEPTYNVAVGRAGRVLVFVMGKEGVHGGGLNKKAYSMAKYLRDSGF</sequence>
<evidence type="ECO:0000250" key="1"/>
<evidence type="ECO:0000250" key="2">
    <source>
        <dbReference type="UniProtKB" id="P35080"/>
    </source>
</evidence>
<evidence type="ECO:0000250" key="3">
    <source>
        <dbReference type="UniProtKB" id="Q9JJV2"/>
    </source>
</evidence>
<evidence type="ECO:0000305" key="4"/>
<evidence type="ECO:0007829" key="5">
    <source>
        <dbReference type="PDB" id="2VK3"/>
    </source>
</evidence>
<name>PROF2_RAT</name>
<protein>
    <recommendedName>
        <fullName>Profilin-2</fullName>
    </recommendedName>
    <alternativeName>
        <fullName>Profilin II</fullName>
    </alternativeName>
</protein>
<dbReference type="EMBL" id="AF228736">
    <property type="protein sequence ID" value="AAG24947.1"/>
    <property type="molecule type" value="mRNA"/>
</dbReference>
<dbReference type="EMBL" id="AF228737">
    <property type="protein sequence ID" value="AAG24948.1"/>
    <property type="molecule type" value="mRNA"/>
</dbReference>
<dbReference type="EMBL" id="AY004289">
    <property type="protein sequence ID" value="AAF86616.1"/>
    <property type="molecule type" value="mRNA"/>
</dbReference>
<dbReference type="RefSeq" id="NP_110500.2">
    <molecule id="Q9EPC6-1"/>
    <property type="nucleotide sequence ID" value="NM_030873.2"/>
</dbReference>
<dbReference type="RefSeq" id="XP_003749330.1">
    <property type="nucleotide sequence ID" value="XM_003749282.3"/>
</dbReference>
<dbReference type="RefSeq" id="XP_006232452.1">
    <property type="nucleotide sequence ID" value="XM_006232390.3"/>
</dbReference>
<dbReference type="PDB" id="2VK3">
    <property type="method" value="X-ray"/>
    <property type="resolution" value="1.70 A"/>
    <property type="chains" value="A=1-140"/>
</dbReference>
<dbReference type="PDBsum" id="2VK3"/>
<dbReference type="SMR" id="Q9EPC6"/>
<dbReference type="BioGRID" id="249528">
    <property type="interactions" value="1"/>
</dbReference>
<dbReference type="CORUM" id="Q9EPC6"/>
<dbReference type="FunCoup" id="Q9EPC6">
    <property type="interactions" value="1623"/>
</dbReference>
<dbReference type="IntAct" id="Q9EPC6">
    <property type="interactions" value="2"/>
</dbReference>
<dbReference type="STRING" id="10116.ENSRNOP00000061388"/>
<dbReference type="iPTMnet" id="Q9EPC6"/>
<dbReference type="PhosphoSitePlus" id="Q9EPC6"/>
<dbReference type="SwissPalm" id="Q9EPC6"/>
<dbReference type="jPOST" id="Q9EPC6"/>
<dbReference type="PaxDb" id="10116-ENSRNOP00000061388"/>
<dbReference type="Ensembl" id="ENSRNOT00000023469.8">
    <molecule id="Q9EPC6-1"/>
    <property type="protein sequence ID" value="ENSRNOP00000023469.3"/>
    <property type="gene ID" value="ENSRNOG00000017427.9"/>
</dbReference>
<dbReference type="GeneID" id="81531"/>
<dbReference type="KEGG" id="rno:81531"/>
<dbReference type="UCSC" id="RGD:621826">
    <molecule id="Q9EPC6-1"/>
    <property type="organism name" value="rat"/>
</dbReference>
<dbReference type="AGR" id="RGD:621826"/>
<dbReference type="CTD" id="5217"/>
<dbReference type="RGD" id="621826">
    <property type="gene designation" value="Pfn2"/>
</dbReference>
<dbReference type="eggNOG" id="KOG1755">
    <property type="taxonomic scope" value="Eukaryota"/>
</dbReference>
<dbReference type="GeneTree" id="ENSGT00940000153664"/>
<dbReference type="HOGENOM" id="CLU_123405_1_0_1"/>
<dbReference type="InParanoid" id="Q9EPC6"/>
<dbReference type="OrthoDB" id="421374at2759"/>
<dbReference type="Reactome" id="R-RNO-5663220">
    <property type="pathway name" value="RHO GTPases Activate Formins"/>
</dbReference>
<dbReference type="EvolutionaryTrace" id="Q9EPC6"/>
<dbReference type="PRO" id="PR:Q9EPC6"/>
<dbReference type="Proteomes" id="UP000002494">
    <property type="component" value="Chromosome 2"/>
</dbReference>
<dbReference type="Bgee" id="ENSRNOG00000017427">
    <property type="expression patterns" value="Expressed in frontal cortex and 20 other cell types or tissues"/>
</dbReference>
<dbReference type="ExpressionAtlas" id="Q9EPC6">
    <property type="expression patterns" value="baseline and differential"/>
</dbReference>
<dbReference type="GO" id="GO:0005737">
    <property type="term" value="C:cytoplasm"/>
    <property type="evidence" value="ECO:0000318"/>
    <property type="project" value="GO_Central"/>
</dbReference>
<dbReference type="GO" id="GO:0005856">
    <property type="term" value="C:cytoskeleton"/>
    <property type="evidence" value="ECO:0007669"/>
    <property type="project" value="UniProtKB-SubCell"/>
</dbReference>
<dbReference type="GO" id="GO:0098978">
    <property type="term" value="C:glutamatergic synapse"/>
    <property type="evidence" value="ECO:0000266"/>
    <property type="project" value="RGD"/>
</dbReference>
<dbReference type="GO" id="GO:0098794">
    <property type="term" value="C:postsynapse"/>
    <property type="evidence" value="ECO:0000266"/>
    <property type="project" value="RGD"/>
</dbReference>
<dbReference type="GO" id="GO:0098793">
    <property type="term" value="C:presynapse"/>
    <property type="evidence" value="ECO:0000266"/>
    <property type="project" value="RGD"/>
</dbReference>
<dbReference type="GO" id="GO:0098685">
    <property type="term" value="C:Schaffer collateral - CA1 synapse"/>
    <property type="evidence" value="ECO:0000266"/>
    <property type="project" value="RGD"/>
</dbReference>
<dbReference type="GO" id="GO:0003779">
    <property type="term" value="F:actin binding"/>
    <property type="evidence" value="ECO:0000314"/>
    <property type="project" value="RGD"/>
</dbReference>
<dbReference type="GO" id="GO:0003785">
    <property type="term" value="F:actin monomer binding"/>
    <property type="evidence" value="ECO:0000266"/>
    <property type="project" value="RGD"/>
</dbReference>
<dbReference type="GO" id="GO:0016887">
    <property type="term" value="F:ATP hydrolysis activity"/>
    <property type="evidence" value="ECO:0000266"/>
    <property type="project" value="RGD"/>
</dbReference>
<dbReference type="GO" id="GO:0005546">
    <property type="term" value="F:phosphatidylinositol-4,5-bisphosphate binding"/>
    <property type="evidence" value="ECO:0000266"/>
    <property type="project" value="RGD"/>
</dbReference>
<dbReference type="GO" id="GO:0098885">
    <property type="term" value="P:modification of postsynaptic actin cytoskeleton"/>
    <property type="evidence" value="ECO:0000266"/>
    <property type="project" value="RGD"/>
</dbReference>
<dbReference type="GO" id="GO:0050804">
    <property type="term" value="P:modulation of chemical synaptic transmission"/>
    <property type="evidence" value="ECO:0000266"/>
    <property type="project" value="RGD"/>
</dbReference>
<dbReference type="GO" id="GO:0030837">
    <property type="term" value="P:negative regulation of actin filament polymerization"/>
    <property type="evidence" value="ECO:0000266"/>
    <property type="project" value="RGD"/>
</dbReference>
<dbReference type="GO" id="GO:0010633">
    <property type="term" value="P:negative regulation of epithelial cell migration"/>
    <property type="evidence" value="ECO:0000266"/>
    <property type="project" value="RGD"/>
</dbReference>
<dbReference type="GO" id="GO:1900028">
    <property type="term" value="P:negative regulation of ruffle assembly"/>
    <property type="evidence" value="ECO:0000266"/>
    <property type="project" value="RGD"/>
</dbReference>
<dbReference type="GO" id="GO:0032233">
    <property type="term" value="P:positive regulation of actin filament bundle assembly"/>
    <property type="evidence" value="ECO:0000266"/>
    <property type="project" value="RGD"/>
</dbReference>
<dbReference type="GO" id="GO:0030838">
    <property type="term" value="P:positive regulation of actin filament polymerization"/>
    <property type="evidence" value="ECO:0000266"/>
    <property type="project" value="RGD"/>
</dbReference>
<dbReference type="GO" id="GO:0051496">
    <property type="term" value="P:positive regulation of stress fiber assembly"/>
    <property type="evidence" value="ECO:0000266"/>
    <property type="project" value="RGD"/>
</dbReference>
<dbReference type="GO" id="GO:0099140">
    <property type="term" value="P:presynaptic actin cytoskeleton organization"/>
    <property type="evidence" value="ECO:0000266"/>
    <property type="project" value="RGD"/>
</dbReference>
<dbReference type="GO" id="GO:0099171">
    <property type="term" value="P:presynaptic modulation of chemical synaptic transmission"/>
    <property type="evidence" value="ECO:0000266"/>
    <property type="project" value="RGD"/>
</dbReference>
<dbReference type="GO" id="GO:0050821">
    <property type="term" value="P:protein stabilization"/>
    <property type="evidence" value="ECO:0000266"/>
    <property type="project" value="RGD"/>
</dbReference>
<dbReference type="GO" id="GO:0030833">
    <property type="term" value="P:regulation of actin filament polymerization"/>
    <property type="evidence" value="ECO:0000314"/>
    <property type="project" value="RGD"/>
</dbReference>
<dbReference type="GO" id="GO:2000300">
    <property type="term" value="P:regulation of synaptic vesicle exocytosis"/>
    <property type="evidence" value="ECO:0000266"/>
    <property type="project" value="RGD"/>
</dbReference>
<dbReference type="CDD" id="cd00148">
    <property type="entry name" value="PROF"/>
    <property type="match status" value="1"/>
</dbReference>
<dbReference type="FunFam" id="3.30.450.30:FF:000006">
    <property type="entry name" value="Profilin"/>
    <property type="match status" value="1"/>
</dbReference>
<dbReference type="Gene3D" id="3.30.450.30">
    <property type="entry name" value="Dynein light chain 2a, cytoplasmic"/>
    <property type="match status" value="1"/>
</dbReference>
<dbReference type="InterPro" id="IPR048278">
    <property type="entry name" value="PFN"/>
</dbReference>
<dbReference type="InterPro" id="IPR005455">
    <property type="entry name" value="PFN_euk"/>
</dbReference>
<dbReference type="InterPro" id="IPR036140">
    <property type="entry name" value="PFN_sf"/>
</dbReference>
<dbReference type="InterPro" id="IPR005454">
    <property type="entry name" value="Profilin1/2/3_vertebrate"/>
</dbReference>
<dbReference type="InterPro" id="IPR027310">
    <property type="entry name" value="Profilin_CS"/>
</dbReference>
<dbReference type="PANTHER" id="PTHR13936">
    <property type="entry name" value="PROFILIN"/>
    <property type="match status" value="1"/>
</dbReference>
<dbReference type="PANTHER" id="PTHR13936:SF15">
    <property type="entry name" value="PROFILIN-2"/>
    <property type="match status" value="1"/>
</dbReference>
<dbReference type="Pfam" id="PF00235">
    <property type="entry name" value="Profilin"/>
    <property type="match status" value="1"/>
</dbReference>
<dbReference type="PRINTS" id="PR00392">
    <property type="entry name" value="PROFILIN"/>
</dbReference>
<dbReference type="PRINTS" id="PR01639">
    <property type="entry name" value="PROFILINMAML"/>
</dbReference>
<dbReference type="SMART" id="SM00392">
    <property type="entry name" value="PROF"/>
    <property type="match status" value="1"/>
</dbReference>
<dbReference type="SUPFAM" id="SSF55770">
    <property type="entry name" value="Profilin (actin-binding protein)"/>
    <property type="match status" value="1"/>
</dbReference>
<dbReference type="PROSITE" id="PS00414">
    <property type="entry name" value="PROFILIN"/>
    <property type="match status" value="1"/>
</dbReference>
<proteinExistence type="evidence at protein level"/>
<keyword id="KW-0002">3D-structure</keyword>
<keyword id="KW-0007">Acetylation</keyword>
<keyword id="KW-0009">Actin-binding</keyword>
<keyword id="KW-0025">Alternative splicing</keyword>
<keyword id="KW-0963">Cytoplasm</keyword>
<keyword id="KW-0206">Cytoskeleton</keyword>
<keyword id="KW-0903">Direct protein sequencing</keyword>
<keyword id="KW-1185">Reference proteome</keyword>
<reference key="1">
    <citation type="journal article" date="2000" name="Mol. Cell. Biol.">
        <title>Profilin II is alternatively spliced, resulting in profilin isoforms that are differentially expressed and have distinct biochemical properties.</title>
        <authorList>
            <person name="Lambrechts A."/>
            <person name="Braun A."/>
            <person name="Jonckheere V."/>
            <person name="Aszodi A."/>
            <person name="Lanier L.M."/>
            <person name="Robbens J."/>
            <person name="Van Colen I."/>
            <person name="Vandekerckhove J."/>
            <person name="Faessler R."/>
            <person name="Ampe C."/>
        </authorList>
    </citation>
    <scope>NUCLEOTIDE SEQUENCE [MRNA]</scope>
    <source>
        <tissue>Brain</tissue>
    </source>
</reference>
<reference key="2">
    <citation type="submission" date="2000-03" db="EMBL/GenBank/DDBJ databases">
        <title>Novel genes expression in rat brain.</title>
        <authorList>
            <person name="Xiao H."/>
            <person name="Huang Q."/>
            <person name="Zhang F."/>
            <person name="Yang Z."/>
            <person name="Chen Z."/>
            <person name="Han Z."/>
            <person name="Zhang X."/>
        </authorList>
    </citation>
    <scope>NUCLEOTIDE SEQUENCE [MRNA]</scope>
    <source>
        <tissue>Brain</tissue>
    </source>
</reference>
<reference key="3">
    <citation type="submission" date="2007-04" db="UniProtKB">
        <authorList>
            <person name="Lubec G."/>
            <person name="Afjehi-Sadat L."/>
            <person name="Chen W.-Q."/>
        </authorList>
    </citation>
    <scope>PROTEIN SEQUENCE OF 55-69; 92-105 AND 109-116</scope>
    <scope>IDENTIFICATION BY MASS SPECTROMETRY</scope>
    <source>
        <strain>Sprague-Dawley</strain>
        <tissue>Hippocampus</tissue>
        <tissue>Spinal cord</tissue>
    </source>
</reference>
<gene>
    <name type="primary">Pfn2</name>
</gene>